<comment type="catalytic activity">
    <reaction evidence="1">
        <text>tRNA(Phe) + L-phenylalanine + ATP = L-phenylalanyl-tRNA(Phe) + AMP + diphosphate + H(+)</text>
        <dbReference type="Rhea" id="RHEA:19413"/>
        <dbReference type="Rhea" id="RHEA-COMP:9668"/>
        <dbReference type="Rhea" id="RHEA-COMP:9699"/>
        <dbReference type="ChEBI" id="CHEBI:15378"/>
        <dbReference type="ChEBI" id="CHEBI:30616"/>
        <dbReference type="ChEBI" id="CHEBI:33019"/>
        <dbReference type="ChEBI" id="CHEBI:58095"/>
        <dbReference type="ChEBI" id="CHEBI:78442"/>
        <dbReference type="ChEBI" id="CHEBI:78531"/>
        <dbReference type="ChEBI" id="CHEBI:456215"/>
        <dbReference type="EC" id="6.1.1.20"/>
    </reaction>
</comment>
<comment type="cofactor">
    <cofactor evidence="1">
        <name>Mg(2+)</name>
        <dbReference type="ChEBI" id="CHEBI:18420"/>
    </cofactor>
    <text evidence="1">Binds 2 magnesium ions per tetramer.</text>
</comment>
<comment type="subunit">
    <text evidence="1">Tetramer of two alpha and two beta subunits.</text>
</comment>
<comment type="subcellular location">
    <subcellularLocation>
        <location evidence="1">Cytoplasm</location>
    </subcellularLocation>
</comment>
<comment type="similarity">
    <text evidence="1">Belongs to the phenylalanyl-tRNA synthetase beta subunit family. Type 1 subfamily.</text>
</comment>
<protein>
    <recommendedName>
        <fullName evidence="1">Phenylalanine--tRNA ligase beta subunit</fullName>
        <ecNumber evidence="1">6.1.1.20</ecNumber>
    </recommendedName>
    <alternativeName>
        <fullName evidence="1">Phenylalanyl-tRNA synthetase beta subunit</fullName>
        <shortName evidence="1">PheRS</shortName>
    </alternativeName>
</protein>
<organism>
    <name type="scientific">Lactobacillus johnsonii (strain CNCM I-12250 / La1 / NCC 533)</name>
    <dbReference type="NCBI Taxonomy" id="257314"/>
    <lineage>
        <taxon>Bacteria</taxon>
        <taxon>Bacillati</taxon>
        <taxon>Bacillota</taxon>
        <taxon>Bacilli</taxon>
        <taxon>Lactobacillales</taxon>
        <taxon>Lactobacillaceae</taxon>
        <taxon>Lactobacillus</taxon>
    </lineage>
</organism>
<feature type="chain" id="PRO_0000126897" description="Phenylalanine--tRNA ligase beta subunit">
    <location>
        <begin position="1"/>
        <end position="804"/>
    </location>
</feature>
<feature type="domain" description="tRNA-binding" evidence="1">
    <location>
        <begin position="39"/>
        <end position="155"/>
    </location>
</feature>
<feature type="domain" description="B5" evidence="1">
    <location>
        <begin position="408"/>
        <end position="483"/>
    </location>
</feature>
<feature type="domain" description="FDX-ACB" evidence="1">
    <location>
        <begin position="711"/>
        <end position="804"/>
    </location>
</feature>
<feature type="binding site" evidence="1">
    <location>
        <position position="461"/>
    </location>
    <ligand>
        <name>Mg(2+)</name>
        <dbReference type="ChEBI" id="CHEBI:18420"/>
        <note>shared with alpha subunit</note>
    </ligand>
</feature>
<feature type="binding site" evidence="1">
    <location>
        <position position="467"/>
    </location>
    <ligand>
        <name>Mg(2+)</name>
        <dbReference type="ChEBI" id="CHEBI:18420"/>
        <note>shared with alpha subunit</note>
    </ligand>
</feature>
<feature type="binding site" evidence="1">
    <location>
        <position position="470"/>
    </location>
    <ligand>
        <name>Mg(2+)</name>
        <dbReference type="ChEBI" id="CHEBI:18420"/>
        <note>shared with alpha subunit</note>
    </ligand>
</feature>
<feature type="binding site" evidence="1">
    <location>
        <position position="471"/>
    </location>
    <ligand>
        <name>Mg(2+)</name>
        <dbReference type="ChEBI" id="CHEBI:18420"/>
        <note>shared with alpha subunit</note>
    </ligand>
</feature>
<gene>
    <name evidence="1" type="primary">pheT</name>
    <name type="ordered locus">LJ_1624</name>
</gene>
<evidence type="ECO:0000255" key="1">
    <source>
        <dbReference type="HAMAP-Rule" id="MF_00283"/>
    </source>
</evidence>
<reference key="1">
    <citation type="journal article" date="2004" name="Proc. Natl. Acad. Sci. U.S.A.">
        <title>The genome sequence of the probiotic intestinal bacterium Lactobacillus johnsonii NCC 533.</title>
        <authorList>
            <person name="Pridmore R.D."/>
            <person name="Berger B."/>
            <person name="Desiere F."/>
            <person name="Vilanova D."/>
            <person name="Barretto C."/>
            <person name="Pittet A.-C."/>
            <person name="Zwahlen M.-C."/>
            <person name="Rouvet M."/>
            <person name="Altermann E."/>
            <person name="Barrangou R."/>
            <person name="Mollet B."/>
            <person name="Mercenier A."/>
            <person name="Klaenhammer T."/>
            <person name="Arigoni F."/>
            <person name="Schell M.A."/>
        </authorList>
    </citation>
    <scope>NUCLEOTIDE SEQUENCE [LARGE SCALE GENOMIC DNA]</scope>
    <source>
        <strain>CNCM I-1225 / La1 / NCC 533</strain>
    </source>
</reference>
<dbReference type="EC" id="6.1.1.20" evidence="1"/>
<dbReference type="EMBL" id="AE017198">
    <property type="protein sequence ID" value="AAS09396.1"/>
    <property type="molecule type" value="Genomic_DNA"/>
</dbReference>
<dbReference type="RefSeq" id="WP_011162319.1">
    <property type="nucleotide sequence ID" value="NC_005362.1"/>
</dbReference>
<dbReference type="SMR" id="Q74IE2"/>
<dbReference type="GeneID" id="83570821"/>
<dbReference type="KEGG" id="ljo:LJ_1624"/>
<dbReference type="PATRIC" id="fig|257314.6.peg.1448"/>
<dbReference type="eggNOG" id="COG0072">
    <property type="taxonomic scope" value="Bacteria"/>
</dbReference>
<dbReference type="HOGENOM" id="CLU_016891_0_0_9"/>
<dbReference type="Proteomes" id="UP000000581">
    <property type="component" value="Chromosome"/>
</dbReference>
<dbReference type="GO" id="GO:0009328">
    <property type="term" value="C:phenylalanine-tRNA ligase complex"/>
    <property type="evidence" value="ECO:0007669"/>
    <property type="project" value="TreeGrafter"/>
</dbReference>
<dbReference type="GO" id="GO:0005524">
    <property type="term" value="F:ATP binding"/>
    <property type="evidence" value="ECO:0007669"/>
    <property type="project" value="UniProtKB-UniRule"/>
</dbReference>
<dbReference type="GO" id="GO:0140096">
    <property type="term" value="F:catalytic activity, acting on a protein"/>
    <property type="evidence" value="ECO:0007669"/>
    <property type="project" value="UniProtKB-ARBA"/>
</dbReference>
<dbReference type="GO" id="GO:0000287">
    <property type="term" value="F:magnesium ion binding"/>
    <property type="evidence" value="ECO:0007669"/>
    <property type="project" value="UniProtKB-UniRule"/>
</dbReference>
<dbReference type="GO" id="GO:0004826">
    <property type="term" value="F:phenylalanine-tRNA ligase activity"/>
    <property type="evidence" value="ECO:0007669"/>
    <property type="project" value="UniProtKB-UniRule"/>
</dbReference>
<dbReference type="GO" id="GO:0016740">
    <property type="term" value="F:transferase activity"/>
    <property type="evidence" value="ECO:0007669"/>
    <property type="project" value="UniProtKB-ARBA"/>
</dbReference>
<dbReference type="GO" id="GO:0000049">
    <property type="term" value="F:tRNA binding"/>
    <property type="evidence" value="ECO:0007669"/>
    <property type="project" value="UniProtKB-KW"/>
</dbReference>
<dbReference type="GO" id="GO:0006432">
    <property type="term" value="P:phenylalanyl-tRNA aminoacylation"/>
    <property type="evidence" value="ECO:0007669"/>
    <property type="project" value="UniProtKB-UniRule"/>
</dbReference>
<dbReference type="CDD" id="cd00769">
    <property type="entry name" value="PheRS_beta_core"/>
    <property type="match status" value="1"/>
</dbReference>
<dbReference type="CDD" id="cd02796">
    <property type="entry name" value="tRNA_bind_bactPheRS"/>
    <property type="match status" value="1"/>
</dbReference>
<dbReference type="FunFam" id="2.40.50.140:FF:000045">
    <property type="entry name" value="Phenylalanine--tRNA ligase beta subunit"/>
    <property type="match status" value="1"/>
</dbReference>
<dbReference type="FunFam" id="3.30.56.10:FF:000002">
    <property type="entry name" value="Phenylalanine--tRNA ligase beta subunit"/>
    <property type="match status" value="1"/>
</dbReference>
<dbReference type="FunFam" id="3.30.70.380:FF:000001">
    <property type="entry name" value="Phenylalanine--tRNA ligase beta subunit"/>
    <property type="match status" value="1"/>
</dbReference>
<dbReference type="Gene3D" id="3.30.56.10">
    <property type="match status" value="2"/>
</dbReference>
<dbReference type="Gene3D" id="3.30.930.10">
    <property type="entry name" value="Bira Bifunctional Protein, Domain 2"/>
    <property type="match status" value="1"/>
</dbReference>
<dbReference type="Gene3D" id="3.30.70.380">
    <property type="entry name" value="Ferrodoxin-fold anticodon-binding domain"/>
    <property type="match status" value="1"/>
</dbReference>
<dbReference type="Gene3D" id="2.40.50.140">
    <property type="entry name" value="Nucleic acid-binding proteins"/>
    <property type="match status" value="1"/>
</dbReference>
<dbReference type="Gene3D" id="3.50.40.10">
    <property type="entry name" value="Phenylalanyl-trna Synthetase, Chain B, domain 3"/>
    <property type="match status" value="1"/>
</dbReference>
<dbReference type="HAMAP" id="MF_00283">
    <property type="entry name" value="Phe_tRNA_synth_beta1"/>
    <property type="match status" value="1"/>
</dbReference>
<dbReference type="InterPro" id="IPR045864">
    <property type="entry name" value="aa-tRNA-synth_II/BPL/LPL"/>
</dbReference>
<dbReference type="InterPro" id="IPR005146">
    <property type="entry name" value="B3/B4_tRNA-bd"/>
</dbReference>
<dbReference type="InterPro" id="IPR009061">
    <property type="entry name" value="DNA-bd_dom_put_sf"/>
</dbReference>
<dbReference type="InterPro" id="IPR005121">
    <property type="entry name" value="Fdx_antiC-bd"/>
</dbReference>
<dbReference type="InterPro" id="IPR036690">
    <property type="entry name" value="Fdx_antiC-bd_sf"/>
</dbReference>
<dbReference type="InterPro" id="IPR012340">
    <property type="entry name" value="NA-bd_OB-fold"/>
</dbReference>
<dbReference type="InterPro" id="IPR045060">
    <property type="entry name" value="Phe-tRNA-ligase_IIc_bsu"/>
</dbReference>
<dbReference type="InterPro" id="IPR004532">
    <property type="entry name" value="Phe-tRNA-ligase_IIc_bsu_bact"/>
</dbReference>
<dbReference type="InterPro" id="IPR020825">
    <property type="entry name" value="Phe-tRNA_synthase-like_B3/B4"/>
</dbReference>
<dbReference type="InterPro" id="IPR041616">
    <property type="entry name" value="PheRS_beta_core"/>
</dbReference>
<dbReference type="InterPro" id="IPR002547">
    <property type="entry name" value="tRNA-bd_dom"/>
</dbReference>
<dbReference type="InterPro" id="IPR033714">
    <property type="entry name" value="tRNA_bind_bactPheRS"/>
</dbReference>
<dbReference type="InterPro" id="IPR005147">
    <property type="entry name" value="tRNA_synthase_B5-dom"/>
</dbReference>
<dbReference type="NCBIfam" id="TIGR00472">
    <property type="entry name" value="pheT_bact"/>
    <property type="match status" value="1"/>
</dbReference>
<dbReference type="NCBIfam" id="NF045760">
    <property type="entry name" value="YtpR"/>
    <property type="match status" value="1"/>
</dbReference>
<dbReference type="PANTHER" id="PTHR10947:SF0">
    <property type="entry name" value="PHENYLALANINE--TRNA LIGASE BETA SUBUNIT"/>
    <property type="match status" value="1"/>
</dbReference>
<dbReference type="PANTHER" id="PTHR10947">
    <property type="entry name" value="PHENYLALANYL-TRNA SYNTHETASE BETA CHAIN AND LEUCINE-RICH REPEAT-CONTAINING PROTEIN 47"/>
    <property type="match status" value="1"/>
</dbReference>
<dbReference type="Pfam" id="PF03483">
    <property type="entry name" value="B3_4"/>
    <property type="match status" value="1"/>
</dbReference>
<dbReference type="Pfam" id="PF03484">
    <property type="entry name" value="B5"/>
    <property type="match status" value="1"/>
</dbReference>
<dbReference type="Pfam" id="PF03147">
    <property type="entry name" value="FDX-ACB"/>
    <property type="match status" value="1"/>
</dbReference>
<dbReference type="Pfam" id="PF01588">
    <property type="entry name" value="tRNA_bind"/>
    <property type="match status" value="1"/>
</dbReference>
<dbReference type="Pfam" id="PF17759">
    <property type="entry name" value="tRNA_synthFbeta"/>
    <property type="match status" value="1"/>
</dbReference>
<dbReference type="SMART" id="SM00873">
    <property type="entry name" value="B3_4"/>
    <property type="match status" value="1"/>
</dbReference>
<dbReference type="SMART" id="SM00874">
    <property type="entry name" value="B5"/>
    <property type="match status" value="1"/>
</dbReference>
<dbReference type="SMART" id="SM00896">
    <property type="entry name" value="FDX-ACB"/>
    <property type="match status" value="1"/>
</dbReference>
<dbReference type="SUPFAM" id="SSF54991">
    <property type="entry name" value="Anticodon-binding domain of PheRS"/>
    <property type="match status" value="1"/>
</dbReference>
<dbReference type="SUPFAM" id="SSF55681">
    <property type="entry name" value="Class II aaRS and biotin synthetases"/>
    <property type="match status" value="1"/>
</dbReference>
<dbReference type="SUPFAM" id="SSF50249">
    <property type="entry name" value="Nucleic acid-binding proteins"/>
    <property type="match status" value="1"/>
</dbReference>
<dbReference type="SUPFAM" id="SSF56037">
    <property type="entry name" value="PheT/TilS domain"/>
    <property type="match status" value="1"/>
</dbReference>
<dbReference type="SUPFAM" id="SSF46955">
    <property type="entry name" value="Putative DNA-binding domain"/>
    <property type="match status" value="1"/>
</dbReference>
<dbReference type="PROSITE" id="PS51483">
    <property type="entry name" value="B5"/>
    <property type="match status" value="1"/>
</dbReference>
<dbReference type="PROSITE" id="PS51447">
    <property type="entry name" value="FDX_ACB"/>
    <property type="match status" value="1"/>
</dbReference>
<dbReference type="PROSITE" id="PS50886">
    <property type="entry name" value="TRBD"/>
    <property type="match status" value="1"/>
</dbReference>
<proteinExistence type="inferred from homology"/>
<name>SYFB_LACJO</name>
<accession>Q74IE2</accession>
<sequence length="804" mass="89459">MLVSYNWLKDFLDLDEDPKDLGEKITRTGVEIASVDHPAEGLKKIVVGHILECEDIEGTHLHKCQVDVGEEEPIQIVCGAPNVAAGEDVIVALHGARIAGNEKIKRGKIRGIKSNGMICGLQEIGFEDKVVPAKYADGIFVFPKDADVKPGEEVYKALGMDDYILDFDITPNRADTLSMEGAAYEVGAIVDEKPKVEPVVLKEDGPDWTNELDVQVDEKLAPKFYLRKISNVKIGESPLWMQRRLWNAGIRPINNVVDVTNYVMLLTGQPMHAYDARTFKDGKLEVRKANKNEKLTLLNDKEVELDPNDIIITDGQKPVMMAGVMGGKNSEVEDDTTDVILESAVFDGTSVRKSALRHANRTEASSRFEKGVNWDNTQKALDMAALLLRNDADGTVNEGEIKATDAQRNPSVVKTTVSYINKVLGTELSRAEMEKIFDQLGFTVAGSEDELVVTIPNRRWDISIPADLVEEVGRIYGYDNLKSTQPLLAETHGGYSAKETAMRRIKDIVQGQGLMEAISYSLTSPEKAISFTKDPKPVVEVQWPLNSSRSTMRENLITGLVDAASYNMARKQKELALFEQGRVYDHENNTFNEHEHLAALYSGHTLAANWQHLDQKIDFYFVKGQLTNLFRAIGIKDEDVEYRAELVQGMHPTRTAGIYINDQYIGLIGMLAHAVTTLDKALRGSEIYVYEIDLDTIVSMLHKGMKAKAAPKFPAIERDLSLLVPNDVTNAQIEAQIKLNGGKYLYDIRVIDVYAGSQIESGHKSISYSLTFLNEKDTLTDEVVATAMEKIEADLKESLKIKVR</sequence>
<keyword id="KW-0030">Aminoacyl-tRNA synthetase</keyword>
<keyword id="KW-0067">ATP-binding</keyword>
<keyword id="KW-0963">Cytoplasm</keyword>
<keyword id="KW-0436">Ligase</keyword>
<keyword id="KW-0460">Magnesium</keyword>
<keyword id="KW-0479">Metal-binding</keyword>
<keyword id="KW-0547">Nucleotide-binding</keyword>
<keyword id="KW-0648">Protein biosynthesis</keyword>
<keyword id="KW-0694">RNA-binding</keyword>
<keyword id="KW-0820">tRNA-binding</keyword>